<evidence type="ECO:0000250" key="1"/>
<evidence type="ECO:0000255" key="2">
    <source>
        <dbReference type="HAMAP-Rule" id="MF_00103"/>
    </source>
</evidence>
<gene>
    <name evidence="2" type="primary">mutM</name>
    <name evidence="2" type="synonym">fpg</name>
    <name type="ordered locus">Caur_1873</name>
</gene>
<organism>
    <name type="scientific">Chloroflexus aurantiacus (strain ATCC 29366 / DSM 635 / J-10-fl)</name>
    <dbReference type="NCBI Taxonomy" id="324602"/>
    <lineage>
        <taxon>Bacteria</taxon>
        <taxon>Bacillati</taxon>
        <taxon>Chloroflexota</taxon>
        <taxon>Chloroflexia</taxon>
        <taxon>Chloroflexales</taxon>
        <taxon>Chloroflexineae</taxon>
        <taxon>Chloroflexaceae</taxon>
        <taxon>Chloroflexus</taxon>
    </lineage>
</organism>
<comment type="function">
    <text evidence="2">Involved in base excision repair of DNA damaged by oxidation or by mutagenic agents. Acts as a DNA glycosylase that recognizes and removes damaged bases. Has a preference for oxidized purines, such as 7,8-dihydro-8-oxoguanine (8-oxoG). Has AP (apurinic/apyrimidinic) lyase activity and introduces nicks in the DNA strand. Cleaves the DNA backbone by beta-delta elimination to generate a single-strand break at the site of the removed base with both 3'- and 5'-phosphates.</text>
</comment>
<comment type="catalytic activity">
    <reaction evidence="2">
        <text>Hydrolysis of DNA containing ring-opened 7-methylguanine residues, releasing 2,6-diamino-4-hydroxy-5-(N-methyl)formamidopyrimidine.</text>
        <dbReference type="EC" id="3.2.2.23"/>
    </reaction>
</comment>
<comment type="catalytic activity">
    <reaction evidence="2">
        <text>2'-deoxyribonucleotide-(2'-deoxyribose 5'-phosphate)-2'-deoxyribonucleotide-DNA = a 3'-end 2'-deoxyribonucleotide-(2,3-dehydro-2,3-deoxyribose 5'-phosphate)-DNA + a 5'-end 5'-phospho-2'-deoxyribonucleoside-DNA + H(+)</text>
        <dbReference type="Rhea" id="RHEA:66592"/>
        <dbReference type="Rhea" id="RHEA-COMP:13180"/>
        <dbReference type="Rhea" id="RHEA-COMP:16897"/>
        <dbReference type="Rhea" id="RHEA-COMP:17067"/>
        <dbReference type="ChEBI" id="CHEBI:15378"/>
        <dbReference type="ChEBI" id="CHEBI:136412"/>
        <dbReference type="ChEBI" id="CHEBI:157695"/>
        <dbReference type="ChEBI" id="CHEBI:167181"/>
        <dbReference type="EC" id="4.2.99.18"/>
    </reaction>
</comment>
<comment type="cofactor">
    <cofactor evidence="2">
        <name>Zn(2+)</name>
        <dbReference type="ChEBI" id="CHEBI:29105"/>
    </cofactor>
    <text evidence="2">Binds 1 zinc ion per subunit.</text>
</comment>
<comment type="subunit">
    <text evidence="2">Monomer.</text>
</comment>
<comment type="similarity">
    <text evidence="2">Belongs to the FPG family.</text>
</comment>
<accession>A9WDC2</accession>
<sequence>MPELPEVETVARSLAPQLQGRTITGLAKLDWPKMLTPSPDEFAALIAGRRIEAIGRRAKWLLLSLDGEWTLAIHLRMSGQLLVAEPETSEARHVHFALDLDNGRRLIFNDQRKFGRVHLLDRQGLAALDAVHGPEPLAADFTPSALAERLQNRRAPIKALLLDQHLIAGIGNIYANEALWLARIHPLTPGAMLTPEQINELHHAIRHVLQEAITNQGSSLRNYRDGYGRQGTQQEHFNVYDRAGEPCPRCQSTIERIVVAQRSTYFCPTCQITMQQPE</sequence>
<proteinExistence type="inferred from homology"/>
<feature type="initiator methionine" description="Removed" evidence="1">
    <location>
        <position position="1"/>
    </location>
</feature>
<feature type="chain" id="PRO_1000075695" description="Formamidopyrimidine-DNA glycosylase">
    <location>
        <begin position="2"/>
        <end position="278"/>
    </location>
</feature>
<feature type="zinc finger region" description="FPG-type" evidence="2">
    <location>
        <begin position="238"/>
        <end position="272"/>
    </location>
</feature>
<feature type="active site" description="Schiff-base intermediate with DNA" evidence="2">
    <location>
        <position position="2"/>
    </location>
</feature>
<feature type="active site" description="Proton donor" evidence="2">
    <location>
        <position position="3"/>
    </location>
</feature>
<feature type="active site" description="Proton donor; for beta-elimination activity" evidence="2">
    <location>
        <position position="59"/>
    </location>
</feature>
<feature type="active site" description="Proton donor; for delta-elimination activity" evidence="2">
    <location>
        <position position="262"/>
    </location>
</feature>
<feature type="binding site" evidence="2">
    <location>
        <position position="93"/>
    </location>
    <ligand>
        <name>DNA</name>
        <dbReference type="ChEBI" id="CHEBI:16991"/>
    </ligand>
</feature>
<feature type="binding site" evidence="2">
    <location>
        <position position="112"/>
    </location>
    <ligand>
        <name>DNA</name>
        <dbReference type="ChEBI" id="CHEBI:16991"/>
    </ligand>
</feature>
<feature type="binding site" evidence="2">
    <location>
        <position position="153"/>
    </location>
    <ligand>
        <name>DNA</name>
        <dbReference type="ChEBI" id="CHEBI:16991"/>
    </ligand>
</feature>
<dbReference type="EC" id="3.2.2.23" evidence="2"/>
<dbReference type="EC" id="4.2.99.18" evidence="2"/>
<dbReference type="EMBL" id="CP000909">
    <property type="protein sequence ID" value="ABY35089.1"/>
    <property type="molecule type" value="Genomic_DNA"/>
</dbReference>
<dbReference type="RefSeq" id="WP_012257743.1">
    <property type="nucleotide sequence ID" value="NC_010175.1"/>
</dbReference>
<dbReference type="RefSeq" id="YP_001635478.1">
    <property type="nucleotide sequence ID" value="NC_010175.1"/>
</dbReference>
<dbReference type="SMR" id="A9WDC2"/>
<dbReference type="FunCoup" id="A9WDC2">
    <property type="interactions" value="323"/>
</dbReference>
<dbReference type="STRING" id="324602.Caur_1873"/>
<dbReference type="EnsemblBacteria" id="ABY35089">
    <property type="protein sequence ID" value="ABY35089"/>
    <property type="gene ID" value="Caur_1873"/>
</dbReference>
<dbReference type="KEGG" id="cau:Caur_1873"/>
<dbReference type="PATRIC" id="fig|324602.8.peg.2137"/>
<dbReference type="eggNOG" id="COG0266">
    <property type="taxonomic scope" value="Bacteria"/>
</dbReference>
<dbReference type="HOGENOM" id="CLU_038423_1_2_0"/>
<dbReference type="InParanoid" id="A9WDC2"/>
<dbReference type="Proteomes" id="UP000002008">
    <property type="component" value="Chromosome"/>
</dbReference>
<dbReference type="GO" id="GO:0034039">
    <property type="term" value="F:8-oxo-7,8-dihydroguanine DNA N-glycosylase activity"/>
    <property type="evidence" value="ECO:0000318"/>
    <property type="project" value="GO_Central"/>
</dbReference>
<dbReference type="GO" id="GO:0140078">
    <property type="term" value="F:class I DNA-(apurinic or apyrimidinic site) endonuclease activity"/>
    <property type="evidence" value="ECO:0007669"/>
    <property type="project" value="UniProtKB-EC"/>
</dbReference>
<dbReference type="GO" id="GO:0003684">
    <property type="term" value="F:damaged DNA binding"/>
    <property type="evidence" value="ECO:0007669"/>
    <property type="project" value="InterPro"/>
</dbReference>
<dbReference type="GO" id="GO:0003906">
    <property type="term" value="F:DNA-(apurinic or apyrimidinic site) endonuclease activity"/>
    <property type="evidence" value="ECO:0000318"/>
    <property type="project" value="GO_Central"/>
</dbReference>
<dbReference type="GO" id="GO:0008270">
    <property type="term" value="F:zinc ion binding"/>
    <property type="evidence" value="ECO:0007669"/>
    <property type="project" value="UniProtKB-UniRule"/>
</dbReference>
<dbReference type="GO" id="GO:0006284">
    <property type="term" value="P:base-excision repair"/>
    <property type="evidence" value="ECO:0000318"/>
    <property type="project" value="GO_Central"/>
</dbReference>
<dbReference type="CDD" id="cd08966">
    <property type="entry name" value="EcFpg-like_N"/>
    <property type="match status" value="1"/>
</dbReference>
<dbReference type="FunFam" id="1.10.8.50:FF:000003">
    <property type="entry name" value="Formamidopyrimidine-DNA glycosylase"/>
    <property type="match status" value="1"/>
</dbReference>
<dbReference type="Gene3D" id="1.10.8.50">
    <property type="match status" value="1"/>
</dbReference>
<dbReference type="Gene3D" id="3.20.190.10">
    <property type="entry name" value="MutM-like, N-terminal"/>
    <property type="match status" value="1"/>
</dbReference>
<dbReference type="HAMAP" id="MF_00103">
    <property type="entry name" value="Fapy_DNA_glycosyl"/>
    <property type="match status" value="1"/>
</dbReference>
<dbReference type="InterPro" id="IPR015886">
    <property type="entry name" value="DNA_glyclase/AP_lyase_DNA-bd"/>
</dbReference>
<dbReference type="InterPro" id="IPR020629">
    <property type="entry name" value="Formamido-pyr_DNA_Glyclase"/>
</dbReference>
<dbReference type="InterPro" id="IPR012319">
    <property type="entry name" value="FPG_cat"/>
</dbReference>
<dbReference type="InterPro" id="IPR035937">
    <property type="entry name" value="MutM-like_N-ter"/>
</dbReference>
<dbReference type="InterPro" id="IPR010979">
    <property type="entry name" value="Ribosomal_uS13-like_H2TH"/>
</dbReference>
<dbReference type="InterPro" id="IPR000214">
    <property type="entry name" value="Znf_DNA_glyclase/AP_lyase"/>
</dbReference>
<dbReference type="InterPro" id="IPR010663">
    <property type="entry name" value="Znf_FPG/IleRS"/>
</dbReference>
<dbReference type="NCBIfam" id="TIGR00577">
    <property type="entry name" value="fpg"/>
    <property type="match status" value="1"/>
</dbReference>
<dbReference type="NCBIfam" id="NF002211">
    <property type="entry name" value="PRK01103.1"/>
    <property type="match status" value="1"/>
</dbReference>
<dbReference type="PANTHER" id="PTHR22993">
    <property type="entry name" value="FORMAMIDOPYRIMIDINE-DNA GLYCOSYLASE"/>
    <property type="match status" value="1"/>
</dbReference>
<dbReference type="PANTHER" id="PTHR22993:SF9">
    <property type="entry name" value="FORMAMIDOPYRIMIDINE-DNA GLYCOSYLASE"/>
    <property type="match status" value="1"/>
</dbReference>
<dbReference type="Pfam" id="PF01149">
    <property type="entry name" value="Fapy_DNA_glyco"/>
    <property type="match status" value="1"/>
</dbReference>
<dbReference type="Pfam" id="PF06831">
    <property type="entry name" value="H2TH"/>
    <property type="match status" value="1"/>
</dbReference>
<dbReference type="Pfam" id="PF06827">
    <property type="entry name" value="zf-FPG_IleRS"/>
    <property type="match status" value="1"/>
</dbReference>
<dbReference type="SMART" id="SM00898">
    <property type="entry name" value="Fapy_DNA_glyco"/>
    <property type="match status" value="1"/>
</dbReference>
<dbReference type="SMART" id="SM01232">
    <property type="entry name" value="H2TH"/>
    <property type="match status" value="1"/>
</dbReference>
<dbReference type="SUPFAM" id="SSF57716">
    <property type="entry name" value="Glucocorticoid receptor-like (DNA-binding domain)"/>
    <property type="match status" value="1"/>
</dbReference>
<dbReference type="SUPFAM" id="SSF81624">
    <property type="entry name" value="N-terminal domain of MutM-like DNA repair proteins"/>
    <property type="match status" value="1"/>
</dbReference>
<dbReference type="SUPFAM" id="SSF46946">
    <property type="entry name" value="S13-like H2TH domain"/>
    <property type="match status" value="1"/>
</dbReference>
<dbReference type="PROSITE" id="PS51068">
    <property type="entry name" value="FPG_CAT"/>
    <property type="match status" value="1"/>
</dbReference>
<dbReference type="PROSITE" id="PS51066">
    <property type="entry name" value="ZF_FPG_2"/>
    <property type="match status" value="1"/>
</dbReference>
<reference key="1">
    <citation type="journal article" date="2011" name="BMC Genomics">
        <title>Complete genome sequence of the filamentous anoxygenic phototrophic bacterium Chloroflexus aurantiacus.</title>
        <authorList>
            <person name="Tang K.H."/>
            <person name="Barry K."/>
            <person name="Chertkov O."/>
            <person name="Dalin E."/>
            <person name="Han C.S."/>
            <person name="Hauser L.J."/>
            <person name="Honchak B.M."/>
            <person name="Karbach L.E."/>
            <person name="Land M.L."/>
            <person name="Lapidus A."/>
            <person name="Larimer F.W."/>
            <person name="Mikhailova N."/>
            <person name="Pitluck S."/>
            <person name="Pierson B.K."/>
            <person name="Blankenship R.E."/>
        </authorList>
    </citation>
    <scope>NUCLEOTIDE SEQUENCE [LARGE SCALE GENOMIC DNA]</scope>
    <source>
        <strain>ATCC 29366 / DSM 635 / J-10-fl</strain>
    </source>
</reference>
<keyword id="KW-0227">DNA damage</keyword>
<keyword id="KW-0234">DNA repair</keyword>
<keyword id="KW-0238">DNA-binding</keyword>
<keyword id="KW-0326">Glycosidase</keyword>
<keyword id="KW-0378">Hydrolase</keyword>
<keyword id="KW-0456">Lyase</keyword>
<keyword id="KW-0479">Metal-binding</keyword>
<keyword id="KW-0511">Multifunctional enzyme</keyword>
<keyword id="KW-1185">Reference proteome</keyword>
<keyword id="KW-0862">Zinc</keyword>
<keyword id="KW-0863">Zinc-finger</keyword>
<protein>
    <recommendedName>
        <fullName evidence="2">Formamidopyrimidine-DNA glycosylase</fullName>
        <shortName evidence="2">Fapy-DNA glycosylase</shortName>
        <ecNumber evidence="2">3.2.2.23</ecNumber>
    </recommendedName>
    <alternativeName>
        <fullName evidence="2">DNA-(apurinic or apyrimidinic site) lyase MutM</fullName>
        <shortName evidence="2">AP lyase MutM</shortName>
        <ecNumber evidence="2">4.2.99.18</ecNumber>
    </alternativeName>
</protein>
<name>FPG_CHLAA</name>